<organism>
    <name type="scientific">Saccharomyces cerevisiae (strain ATCC 204508 / S288c)</name>
    <name type="common">Baker's yeast</name>
    <dbReference type="NCBI Taxonomy" id="559292"/>
    <lineage>
        <taxon>Eukaryota</taxon>
        <taxon>Fungi</taxon>
        <taxon>Dikarya</taxon>
        <taxon>Ascomycota</taxon>
        <taxon>Saccharomycotina</taxon>
        <taxon>Saccharomycetes</taxon>
        <taxon>Saccharomycetales</taxon>
        <taxon>Saccharomycetaceae</taxon>
        <taxon>Saccharomyces</taxon>
    </lineage>
</organism>
<comment type="function">
    <text>Acts in ubiquitin metabolism and is necessary for the control of single-copy DNA replication.</text>
</comment>
<comment type="miscellaneous">
    <text evidence="3">Present with 3270 molecules/cell in log phase SD medium.</text>
</comment>
<proteinExistence type="evidence at protein level"/>
<feature type="chain" id="PRO_0000079981" description="Protein DOS2">
    <location>
        <begin position="1"/>
        <end position="310"/>
    </location>
</feature>
<feature type="domain" description="BSD" evidence="1">
    <location>
        <begin position="176"/>
        <end position="228"/>
    </location>
</feature>
<feature type="region of interest" description="Disordered" evidence="2">
    <location>
        <begin position="15"/>
        <end position="45"/>
    </location>
</feature>
<feature type="region of interest" description="Disordered" evidence="2">
    <location>
        <begin position="131"/>
        <end position="151"/>
    </location>
</feature>
<feature type="region of interest" description="Disordered" evidence="2">
    <location>
        <begin position="240"/>
        <end position="310"/>
    </location>
</feature>
<feature type="compositionally biased region" description="Basic and acidic residues" evidence="2">
    <location>
        <begin position="15"/>
        <end position="26"/>
    </location>
</feature>
<feature type="compositionally biased region" description="Basic and acidic residues" evidence="2">
    <location>
        <begin position="135"/>
        <end position="146"/>
    </location>
</feature>
<feature type="compositionally biased region" description="Acidic residues" evidence="2">
    <location>
        <begin position="247"/>
        <end position="263"/>
    </location>
</feature>
<feature type="compositionally biased region" description="Basic and acidic residues" evidence="2">
    <location>
        <begin position="264"/>
        <end position="276"/>
    </location>
</feature>
<feature type="compositionally biased region" description="Basic and acidic residues" evidence="2">
    <location>
        <begin position="284"/>
        <end position="300"/>
    </location>
</feature>
<feature type="compositionally biased region" description="Acidic residues" evidence="2">
    <location>
        <begin position="301"/>
        <end position="310"/>
    </location>
</feature>
<keyword id="KW-1185">Reference proteome</keyword>
<name>DOS2_YEAST</name>
<evidence type="ECO:0000255" key="1">
    <source>
        <dbReference type="PROSITE-ProRule" id="PRU00036"/>
    </source>
</evidence>
<evidence type="ECO:0000256" key="2">
    <source>
        <dbReference type="SAM" id="MobiDB-lite"/>
    </source>
</evidence>
<evidence type="ECO:0000269" key="3">
    <source>
    </source>
</evidence>
<protein>
    <recommendedName>
        <fullName>Protein DOS2</fullName>
    </recommendedName>
</protein>
<accession>P54858</accession>
<accession>D6VS54</accession>
<dbReference type="EMBL" id="U19857">
    <property type="protein sequence ID" value="AAA66522.1"/>
    <property type="molecule type" value="Genomic_DNA"/>
</dbReference>
<dbReference type="EMBL" id="X84162">
    <property type="protein sequence ID" value="CAA58984.1"/>
    <property type="molecule type" value="Genomic_DNA"/>
</dbReference>
<dbReference type="EMBL" id="Z74364">
    <property type="protein sequence ID" value="CAA98886.1"/>
    <property type="molecule type" value="Genomic_DNA"/>
</dbReference>
<dbReference type="EMBL" id="Z49209">
    <property type="protein sequence ID" value="CAA89097.1"/>
    <property type="molecule type" value="Genomic_DNA"/>
</dbReference>
<dbReference type="EMBL" id="Z46796">
    <property type="protein sequence ID" value="CAA86790.1"/>
    <property type="molecule type" value="Genomic_DNA"/>
</dbReference>
<dbReference type="EMBL" id="AY557687">
    <property type="protein sequence ID" value="AAS56013.1"/>
    <property type="molecule type" value="Genomic_DNA"/>
</dbReference>
<dbReference type="EMBL" id="BK006938">
    <property type="protein sequence ID" value="DAA11914.1"/>
    <property type="molecule type" value="Genomic_DNA"/>
</dbReference>
<dbReference type="PIR" id="S54052">
    <property type="entry name" value="S54052"/>
</dbReference>
<dbReference type="RefSeq" id="NP_010353.3">
    <property type="nucleotide sequence ID" value="NM_001180376.3"/>
</dbReference>
<dbReference type="SMR" id="P54858"/>
<dbReference type="BioGRID" id="32123">
    <property type="interactions" value="86"/>
</dbReference>
<dbReference type="DIP" id="DIP-4785N"/>
<dbReference type="FunCoup" id="P54858">
    <property type="interactions" value="125"/>
</dbReference>
<dbReference type="IntAct" id="P54858">
    <property type="interactions" value="27"/>
</dbReference>
<dbReference type="MINT" id="P54858"/>
<dbReference type="STRING" id="4932.YDR068W"/>
<dbReference type="iPTMnet" id="P54858"/>
<dbReference type="PaxDb" id="4932-YDR068W"/>
<dbReference type="PeptideAtlas" id="P54858"/>
<dbReference type="EnsemblFungi" id="YDR068W_mRNA">
    <property type="protein sequence ID" value="YDR068W"/>
    <property type="gene ID" value="YDR068W"/>
</dbReference>
<dbReference type="GeneID" id="851640"/>
<dbReference type="KEGG" id="sce:YDR068W"/>
<dbReference type="AGR" id="SGD:S000002475"/>
<dbReference type="SGD" id="S000002475">
    <property type="gene designation" value="DOS2"/>
</dbReference>
<dbReference type="VEuPathDB" id="FungiDB:YDR068W"/>
<dbReference type="eggNOG" id="KOG2690">
    <property type="taxonomic scope" value="Eukaryota"/>
</dbReference>
<dbReference type="HOGENOM" id="CLU_064795_0_0_1"/>
<dbReference type="InParanoid" id="P54858"/>
<dbReference type="OMA" id="LFWYRYF"/>
<dbReference type="OrthoDB" id="73788at2759"/>
<dbReference type="BioCyc" id="YEAST:G3O-29675-MONOMER"/>
<dbReference type="BioGRID-ORCS" id="851640">
    <property type="hits" value="2 hits in 10 CRISPR screens"/>
</dbReference>
<dbReference type="PRO" id="PR:P54858"/>
<dbReference type="Proteomes" id="UP000002311">
    <property type="component" value="Chromosome IV"/>
</dbReference>
<dbReference type="RNAct" id="P54858">
    <property type="molecule type" value="protein"/>
</dbReference>
<dbReference type="GO" id="GO:0005737">
    <property type="term" value="C:cytoplasm"/>
    <property type="evidence" value="ECO:0007005"/>
    <property type="project" value="SGD"/>
</dbReference>
<dbReference type="Gene3D" id="1.10.3970.10">
    <property type="entry name" value="BSD domain"/>
    <property type="match status" value="1"/>
</dbReference>
<dbReference type="InterPro" id="IPR005607">
    <property type="entry name" value="BSD_dom"/>
</dbReference>
<dbReference type="InterPro" id="IPR035925">
    <property type="entry name" value="BSD_dom_sf"/>
</dbReference>
<dbReference type="InterPro" id="IPR051494">
    <property type="entry name" value="BSD_domain-containing"/>
</dbReference>
<dbReference type="PANTHER" id="PTHR16019:SF5">
    <property type="entry name" value="BSD DOMAIN-CONTAINING PROTEIN 1"/>
    <property type="match status" value="1"/>
</dbReference>
<dbReference type="PANTHER" id="PTHR16019">
    <property type="entry name" value="SYNAPSE-ASSOCIATED PROTEIN"/>
    <property type="match status" value="1"/>
</dbReference>
<dbReference type="Pfam" id="PF03909">
    <property type="entry name" value="BSD"/>
    <property type="match status" value="1"/>
</dbReference>
<dbReference type="SMART" id="SM00751">
    <property type="entry name" value="BSD"/>
    <property type="match status" value="1"/>
</dbReference>
<dbReference type="SUPFAM" id="SSF140383">
    <property type="entry name" value="BSD domain-like"/>
    <property type="match status" value="1"/>
</dbReference>
<dbReference type="PROSITE" id="PS50858">
    <property type="entry name" value="BSD"/>
    <property type="match status" value="1"/>
</dbReference>
<gene>
    <name type="primary">DOS2</name>
    <name type="ordered locus">YDR068W</name>
    <name type="ORF">D4267</name>
    <name type="ORF">YD8554.01</name>
    <name type="ORF">YD9609.22</name>
</gene>
<reference key="1">
    <citation type="journal article" date="1996" name="Mol. Cell. Biol.">
        <title>Coordinating DNA replication to produce one copy of the genome requires genes that act in ubiquitin metabolism.</title>
        <authorList>
            <person name="Singer J.D."/>
            <person name="Manning B.M."/>
            <person name="Formosa T."/>
        </authorList>
    </citation>
    <scope>NUCLEOTIDE SEQUENCE [GENOMIC DNA]</scope>
</reference>
<reference key="2">
    <citation type="journal article" date="1996" name="Yeast">
        <title>Nucleotide sequence analysis of a 32,500 bp region of the right arm of Saccharomyces cerevisiae chromosome IV.</title>
        <authorList>
            <person name="Brandt P."/>
            <person name="Ramlow S."/>
            <person name="Otto B."/>
            <person name="Bloecker H."/>
        </authorList>
    </citation>
    <scope>NUCLEOTIDE SEQUENCE [GENOMIC DNA]</scope>
    <source>
        <strain>ATCC 204508 / S288c</strain>
    </source>
</reference>
<reference key="3">
    <citation type="journal article" date="1997" name="Nature">
        <title>The nucleotide sequence of Saccharomyces cerevisiae chromosome IV.</title>
        <authorList>
            <person name="Jacq C."/>
            <person name="Alt-Moerbe J."/>
            <person name="Andre B."/>
            <person name="Arnold W."/>
            <person name="Bahr A."/>
            <person name="Ballesta J.P.G."/>
            <person name="Bargues M."/>
            <person name="Baron L."/>
            <person name="Becker A."/>
            <person name="Biteau N."/>
            <person name="Bloecker H."/>
            <person name="Blugeon C."/>
            <person name="Boskovic J."/>
            <person name="Brandt P."/>
            <person name="Brueckner M."/>
            <person name="Buitrago M.J."/>
            <person name="Coster F."/>
            <person name="Delaveau T."/>
            <person name="del Rey F."/>
            <person name="Dujon B."/>
            <person name="Eide L.G."/>
            <person name="Garcia-Cantalejo J.M."/>
            <person name="Goffeau A."/>
            <person name="Gomez-Peris A."/>
            <person name="Granotier C."/>
            <person name="Hanemann V."/>
            <person name="Hankeln T."/>
            <person name="Hoheisel J.D."/>
            <person name="Jaeger W."/>
            <person name="Jimenez A."/>
            <person name="Jonniaux J.-L."/>
            <person name="Kraemer C."/>
            <person name="Kuester H."/>
            <person name="Laamanen P."/>
            <person name="Legros Y."/>
            <person name="Louis E.J."/>
            <person name="Moeller-Rieker S."/>
            <person name="Monnet A."/>
            <person name="Moro M."/>
            <person name="Mueller-Auer S."/>
            <person name="Nussbaumer B."/>
            <person name="Paricio N."/>
            <person name="Paulin L."/>
            <person name="Perea J."/>
            <person name="Perez-Alonso M."/>
            <person name="Perez-Ortin J.E."/>
            <person name="Pohl T.M."/>
            <person name="Prydz H."/>
            <person name="Purnelle B."/>
            <person name="Rasmussen S.W."/>
            <person name="Remacha M.A."/>
            <person name="Revuelta J.L."/>
            <person name="Rieger M."/>
            <person name="Salom D."/>
            <person name="Saluz H.P."/>
            <person name="Saiz J.E."/>
            <person name="Saren A.-M."/>
            <person name="Schaefer M."/>
            <person name="Scharfe M."/>
            <person name="Schmidt E.R."/>
            <person name="Schneider C."/>
            <person name="Scholler P."/>
            <person name="Schwarz S."/>
            <person name="Soler-Mira A."/>
            <person name="Urrestarazu L.A."/>
            <person name="Verhasselt P."/>
            <person name="Vissers S."/>
            <person name="Voet M."/>
            <person name="Volckaert G."/>
            <person name="Wagner G."/>
            <person name="Wambutt R."/>
            <person name="Wedler E."/>
            <person name="Wedler H."/>
            <person name="Woelfl S."/>
            <person name="Harris D.E."/>
            <person name="Bowman S."/>
            <person name="Brown D."/>
            <person name="Churcher C.M."/>
            <person name="Connor R."/>
            <person name="Dedman K."/>
            <person name="Gentles S."/>
            <person name="Hamlin N."/>
            <person name="Hunt S."/>
            <person name="Jones L."/>
            <person name="McDonald S."/>
            <person name="Murphy L.D."/>
            <person name="Niblett D."/>
            <person name="Odell C."/>
            <person name="Oliver K."/>
            <person name="Rajandream M.A."/>
            <person name="Richards C."/>
            <person name="Shore L."/>
            <person name="Walsh S.V."/>
            <person name="Barrell B.G."/>
            <person name="Dietrich F.S."/>
            <person name="Mulligan J.T."/>
            <person name="Allen E."/>
            <person name="Araujo R."/>
            <person name="Aviles E."/>
            <person name="Berno A."/>
            <person name="Carpenter J."/>
            <person name="Chen E."/>
            <person name="Cherry J.M."/>
            <person name="Chung E."/>
            <person name="Duncan M."/>
            <person name="Hunicke-Smith S."/>
            <person name="Hyman R.W."/>
            <person name="Komp C."/>
            <person name="Lashkari D."/>
            <person name="Lew H."/>
            <person name="Lin D."/>
            <person name="Mosedale D."/>
            <person name="Nakahara K."/>
            <person name="Namath A."/>
            <person name="Oefner P."/>
            <person name="Oh C."/>
            <person name="Petel F.X."/>
            <person name="Roberts D."/>
            <person name="Schramm S."/>
            <person name="Schroeder M."/>
            <person name="Shogren T."/>
            <person name="Shroff N."/>
            <person name="Winant A."/>
            <person name="Yelton M.A."/>
            <person name="Botstein D."/>
            <person name="Davis R.W."/>
            <person name="Johnston M."/>
            <person name="Andrews S."/>
            <person name="Brinkman R."/>
            <person name="Cooper J."/>
            <person name="Ding H."/>
            <person name="Du Z."/>
            <person name="Favello A."/>
            <person name="Fulton L."/>
            <person name="Gattung S."/>
            <person name="Greco T."/>
            <person name="Hallsworth K."/>
            <person name="Hawkins J."/>
            <person name="Hillier L.W."/>
            <person name="Jier M."/>
            <person name="Johnson D."/>
            <person name="Johnston L."/>
            <person name="Kirsten J."/>
            <person name="Kucaba T."/>
            <person name="Langston Y."/>
            <person name="Latreille P."/>
            <person name="Le T."/>
            <person name="Mardis E."/>
            <person name="Menezes S."/>
            <person name="Miller N."/>
            <person name="Nhan M."/>
            <person name="Pauley A."/>
            <person name="Peluso D."/>
            <person name="Rifkin L."/>
            <person name="Riles L."/>
            <person name="Taich A."/>
            <person name="Trevaskis E."/>
            <person name="Vignati D."/>
            <person name="Wilcox L."/>
            <person name="Wohldman P."/>
            <person name="Vaudin M."/>
            <person name="Wilson R."/>
            <person name="Waterston R."/>
            <person name="Albermann K."/>
            <person name="Hani J."/>
            <person name="Heumann K."/>
            <person name="Kleine K."/>
            <person name="Mewes H.-W."/>
            <person name="Zollner A."/>
            <person name="Zaccaria P."/>
        </authorList>
    </citation>
    <scope>NUCLEOTIDE SEQUENCE [LARGE SCALE GENOMIC DNA]</scope>
    <source>
        <strain>ATCC 204508 / S288c</strain>
    </source>
</reference>
<reference key="4">
    <citation type="journal article" date="2014" name="G3 (Bethesda)">
        <title>The reference genome sequence of Saccharomyces cerevisiae: Then and now.</title>
        <authorList>
            <person name="Engel S.R."/>
            <person name="Dietrich F.S."/>
            <person name="Fisk D.G."/>
            <person name="Binkley G."/>
            <person name="Balakrishnan R."/>
            <person name="Costanzo M.C."/>
            <person name="Dwight S.S."/>
            <person name="Hitz B.C."/>
            <person name="Karra K."/>
            <person name="Nash R.S."/>
            <person name="Weng S."/>
            <person name="Wong E.D."/>
            <person name="Lloyd P."/>
            <person name="Skrzypek M.S."/>
            <person name="Miyasato S.R."/>
            <person name="Simison M."/>
            <person name="Cherry J.M."/>
        </authorList>
    </citation>
    <scope>GENOME REANNOTATION</scope>
    <source>
        <strain>ATCC 204508 / S288c</strain>
    </source>
</reference>
<reference key="5">
    <citation type="journal article" date="2007" name="Genome Res.">
        <title>Approaching a complete repository of sequence-verified protein-encoding clones for Saccharomyces cerevisiae.</title>
        <authorList>
            <person name="Hu Y."/>
            <person name="Rolfs A."/>
            <person name="Bhullar B."/>
            <person name="Murthy T.V.S."/>
            <person name="Zhu C."/>
            <person name="Berger M.F."/>
            <person name="Camargo A.A."/>
            <person name="Kelley F."/>
            <person name="McCarron S."/>
            <person name="Jepson D."/>
            <person name="Richardson A."/>
            <person name="Raphael J."/>
            <person name="Moreira D."/>
            <person name="Taycher E."/>
            <person name="Zuo D."/>
            <person name="Mohr S."/>
            <person name="Kane M.F."/>
            <person name="Williamson J."/>
            <person name="Simpson A.J.G."/>
            <person name="Bulyk M.L."/>
            <person name="Harlow E."/>
            <person name="Marsischky G."/>
            <person name="Kolodner R.D."/>
            <person name="LaBaer J."/>
        </authorList>
    </citation>
    <scope>NUCLEOTIDE SEQUENCE [GENOMIC DNA]</scope>
    <source>
        <strain>ATCC 204508 / S288c</strain>
    </source>
</reference>
<reference key="6">
    <citation type="journal article" date="2003" name="Nature">
        <title>Global analysis of protein expression in yeast.</title>
        <authorList>
            <person name="Ghaemmaghami S."/>
            <person name="Huh W.-K."/>
            <person name="Bower K."/>
            <person name="Howson R.W."/>
            <person name="Belle A."/>
            <person name="Dephoure N."/>
            <person name="O'Shea E.K."/>
            <person name="Weissman J.S."/>
        </authorList>
    </citation>
    <scope>LEVEL OF PROTEIN EXPRESSION [LARGE SCALE ANALYSIS]</scope>
</reference>
<reference key="7">
    <citation type="journal article" date="2009" name="Science">
        <title>Global analysis of Cdk1 substrate phosphorylation sites provides insights into evolution.</title>
        <authorList>
            <person name="Holt L.J."/>
            <person name="Tuch B.B."/>
            <person name="Villen J."/>
            <person name="Johnson A.D."/>
            <person name="Gygi S.P."/>
            <person name="Morgan D.O."/>
        </authorList>
    </citation>
    <scope>IDENTIFICATION BY MASS SPECTROMETRY [LARGE SCALE ANALYSIS]</scope>
</reference>
<sequence length="310" mass="35964">MEFFYEEQVACIEDDKISNSHTKETGSTENTENNELQSRDDKTNEAFQKLEEEVNKRYEKTTSAFKKLVIEKDDGIEINLPISNETTETAQKYLKKLDENIHSVESLAQSYWSKMKTKNFWSGFSSFDNAAENDSNDKDENSKENEIAVGGNRTEAELRTLSKDKSVYLDNKMDLQLDPFDVDEKTEEICSILQGDKDISKLMNDIVPHKISYKDFWHIYFLQRNKILDKESKRKEILSKKEKETEEKEVEWDDEEEEEDDDKVEAVADNKSKGETKVAVSQEGLKDVSDHVGLANKDESKDDDDDDDWE</sequence>